<name>TRMD_STRPJ</name>
<reference key="1">
    <citation type="journal article" date="2009" name="J. Bacteriol.">
        <title>Role of conjugative elements in the evolution of the multidrug-resistant pandemic clone Streptococcus pneumoniae Spain23F ST81.</title>
        <authorList>
            <person name="Croucher N.J."/>
            <person name="Walker D."/>
            <person name="Romero P."/>
            <person name="Lennard N."/>
            <person name="Paterson G.K."/>
            <person name="Bason N.C."/>
            <person name="Mitchell A.M."/>
            <person name="Quail M.A."/>
            <person name="Andrew P.W."/>
            <person name="Parkhill J."/>
            <person name="Bentley S.D."/>
            <person name="Mitchell T.J."/>
        </authorList>
    </citation>
    <scope>NUCLEOTIDE SEQUENCE [LARGE SCALE GENOMIC DNA]</scope>
    <source>
        <strain>ATCC 700669 / Spain 23F-1</strain>
    </source>
</reference>
<protein>
    <recommendedName>
        <fullName evidence="1">tRNA (guanine-N(1)-)-methyltransferase</fullName>
        <ecNumber evidence="1">2.1.1.228</ecNumber>
    </recommendedName>
    <alternativeName>
        <fullName evidence="1">M1G-methyltransferase</fullName>
    </alternativeName>
    <alternativeName>
        <fullName evidence="1">tRNA [GM37] methyltransferase</fullName>
    </alternativeName>
</protein>
<sequence length="239" mass="27633">MKIDILTLFPEMFSPLEHSIVGKAREKGLLDIQYHNFRENAEKARHVDDEPYGGGQGMLLRAQPIFDSFDAIEKKNPRVILLDPAGKQFDQAYAEDLAQEEELIFICGHYEGYDERIKTLVTDEISLGDYVLTGGELAAMTMIDATVRLIPEVIGKESSHQDDSFSSGLLEYPQYTRPYDYRGMVVPDVLMSGHHEKIRQWRLYESLKKTYERRPDLLEHYQLTVEEEKMLAEIKENKE</sequence>
<organism>
    <name type="scientific">Streptococcus pneumoniae (strain ATCC 700669 / Spain 23F-1)</name>
    <dbReference type="NCBI Taxonomy" id="561276"/>
    <lineage>
        <taxon>Bacteria</taxon>
        <taxon>Bacillati</taxon>
        <taxon>Bacillota</taxon>
        <taxon>Bacilli</taxon>
        <taxon>Lactobacillales</taxon>
        <taxon>Streptococcaceae</taxon>
        <taxon>Streptococcus</taxon>
    </lineage>
</organism>
<dbReference type="EC" id="2.1.1.228" evidence="1"/>
<dbReference type="EMBL" id="FM211187">
    <property type="protein sequence ID" value="CAR68545.1"/>
    <property type="molecule type" value="Genomic_DNA"/>
</dbReference>
<dbReference type="RefSeq" id="WP_000686921.1">
    <property type="nucleotide sequence ID" value="NC_011900.1"/>
</dbReference>
<dbReference type="SMR" id="B8ZND2"/>
<dbReference type="KEGG" id="sne:SPN23F07000"/>
<dbReference type="HOGENOM" id="CLU_047363_0_1_9"/>
<dbReference type="GO" id="GO:0005829">
    <property type="term" value="C:cytosol"/>
    <property type="evidence" value="ECO:0007669"/>
    <property type="project" value="TreeGrafter"/>
</dbReference>
<dbReference type="GO" id="GO:0052906">
    <property type="term" value="F:tRNA (guanine(37)-N1)-methyltransferase activity"/>
    <property type="evidence" value="ECO:0007669"/>
    <property type="project" value="UniProtKB-UniRule"/>
</dbReference>
<dbReference type="GO" id="GO:0002939">
    <property type="term" value="P:tRNA N1-guanine methylation"/>
    <property type="evidence" value="ECO:0007669"/>
    <property type="project" value="TreeGrafter"/>
</dbReference>
<dbReference type="CDD" id="cd18080">
    <property type="entry name" value="TrmD-like"/>
    <property type="match status" value="1"/>
</dbReference>
<dbReference type="FunFam" id="1.10.1270.20:FF:000001">
    <property type="entry name" value="tRNA (guanine-N(1)-)-methyltransferase"/>
    <property type="match status" value="1"/>
</dbReference>
<dbReference type="FunFam" id="3.40.1280.10:FF:000001">
    <property type="entry name" value="tRNA (guanine-N(1)-)-methyltransferase"/>
    <property type="match status" value="1"/>
</dbReference>
<dbReference type="Gene3D" id="3.40.1280.10">
    <property type="match status" value="1"/>
</dbReference>
<dbReference type="Gene3D" id="1.10.1270.20">
    <property type="entry name" value="tRNA(m1g37)methyltransferase, domain 2"/>
    <property type="match status" value="1"/>
</dbReference>
<dbReference type="HAMAP" id="MF_00605">
    <property type="entry name" value="TrmD"/>
    <property type="match status" value="1"/>
</dbReference>
<dbReference type="InterPro" id="IPR029028">
    <property type="entry name" value="Alpha/beta_knot_MTases"/>
</dbReference>
<dbReference type="InterPro" id="IPR023148">
    <property type="entry name" value="tRNA_m1G_MeTrfase_C_sf"/>
</dbReference>
<dbReference type="InterPro" id="IPR002649">
    <property type="entry name" value="tRNA_m1G_MeTrfase_TrmD"/>
</dbReference>
<dbReference type="InterPro" id="IPR029026">
    <property type="entry name" value="tRNA_m1G_MTases_N"/>
</dbReference>
<dbReference type="InterPro" id="IPR016009">
    <property type="entry name" value="tRNA_MeTrfase_TRMD/TRM10"/>
</dbReference>
<dbReference type="NCBIfam" id="NF000648">
    <property type="entry name" value="PRK00026.1"/>
    <property type="match status" value="1"/>
</dbReference>
<dbReference type="NCBIfam" id="TIGR00088">
    <property type="entry name" value="trmD"/>
    <property type="match status" value="1"/>
</dbReference>
<dbReference type="PANTHER" id="PTHR46417">
    <property type="entry name" value="TRNA (GUANINE-N(1)-)-METHYLTRANSFERASE"/>
    <property type="match status" value="1"/>
</dbReference>
<dbReference type="PANTHER" id="PTHR46417:SF1">
    <property type="entry name" value="TRNA (GUANINE-N(1)-)-METHYLTRANSFERASE"/>
    <property type="match status" value="1"/>
</dbReference>
<dbReference type="Pfam" id="PF01746">
    <property type="entry name" value="tRNA_m1G_MT"/>
    <property type="match status" value="1"/>
</dbReference>
<dbReference type="PIRSF" id="PIRSF000386">
    <property type="entry name" value="tRNA_mtase"/>
    <property type="match status" value="1"/>
</dbReference>
<dbReference type="SUPFAM" id="SSF75217">
    <property type="entry name" value="alpha/beta knot"/>
    <property type="match status" value="1"/>
</dbReference>
<evidence type="ECO:0000255" key="1">
    <source>
        <dbReference type="HAMAP-Rule" id="MF_00605"/>
    </source>
</evidence>
<gene>
    <name evidence="1" type="primary">trmD</name>
    <name type="ordered locus">SPN23F07000</name>
</gene>
<feature type="chain" id="PRO_1000198587" description="tRNA (guanine-N(1)-)-methyltransferase">
    <location>
        <begin position="1"/>
        <end position="239"/>
    </location>
</feature>
<feature type="binding site" evidence="1">
    <location>
        <position position="108"/>
    </location>
    <ligand>
        <name>S-adenosyl-L-methionine</name>
        <dbReference type="ChEBI" id="CHEBI:59789"/>
    </ligand>
</feature>
<feature type="binding site" evidence="1">
    <location>
        <begin position="127"/>
        <end position="132"/>
    </location>
    <ligand>
        <name>S-adenosyl-L-methionine</name>
        <dbReference type="ChEBI" id="CHEBI:59789"/>
    </ligand>
</feature>
<comment type="function">
    <text evidence="1">Specifically methylates guanosine-37 in various tRNAs.</text>
</comment>
<comment type="catalytic activity">
    <reaction evidence="1">
        <text>guanosine(37) in tRNA + S-adenosyl-L-methionine = N(1)-methylguanosine(37) in tRNA + S-adenosyl-L-homocysteine + H(+)</text>
        <dbReference type="Rhea" id="RHEA:36899"/>
        <dbReference type="Rhea" id="RHEA-COMP:10145"/>
        <dbReference type="Rhea" id="RHEA-COMP:10147"/>
        <dbReference type="ChEBI" id="CHEBI:15378"/>
        <dbReference type="ChEBI" id="CHEBI:57856"/>
        <dbReference type="ChEBI" id="CHEBI:59789"/>
        <dbReference type="ChEBI" id="CHEBI:73542"/>
        <dbReference type="ChEBI" id="CHEBI:74269"/>
        <dbReference type="EC" id="2.1.1.228"/>
    </reaction>
</comment>
<comment type="subunit">
    <text evidence="1">Homodimer.</text>
</comment>
<comment type="subcellular location">
    <subcellularLocation>
        <location evidence="1">Cytoplasm</location>
    </subcellularLocation>
</comment>
<comment type="similarity">
    <text evidence="1">Belongs to the RNA methyltransferase TrmD family.</text>
</comment>
<keyword id="KW-0963">Cytoplasm</keyword>
<keyword id="KW-0489">Methyltransferase</keyword>
<keyword id="KW-0949">S-adenosyl-L-methionine</keyword>
<keyword id="KW-0808">Transferase</keyword>
<keyword id="KW-0819">tRNA processing</keyword>
<proteinExistence type="inferred from homology"/>
<accession>B8ZND2</accession>